<protein>
    <recommendedName>
        <fullName>Methylosome subunit pICln</fullName>
    </recommendedName>
    <alternativeName>
        <fullName>Chloride channel, nucleotide sensitive 1A</fullName>
    </alternativeName>
    <alternativeName>
        <fullName>Chloride conductance regulatory protein ICln</fullName>
        <shortName>I(Cln)</shortName>
    </alternativeName>
    <alternativeName>
        <fullName>Chloride ion current inducer protein</fullName>
        <shortName>ClCI</shortName>
    </alternativeName>
    <alternativeName>
        <fullName>Reticulocyte pICln</fullName>
    </alternativeName>
</protein>
<comment type="function">
    <text evidence="2 4 7 8">Involved in both the assembly of spliceosomal snRNPs and the methylation of Sm proteins (PubMed:10330151, PubMed:11713266, PubMed:18984161, PubMed:21081503). Chaperone that regulates the assembly of spliceosomal U1, U2, U4 and U5 small nuclear ribonucleoproteins (snRNPs), the building blocks of the spliceosome, and thereby plays an important role in the splicing of cellular pre-mRNAs (PubMed:10330151, PubMed:18984161). Most spliceosomal snRNPs contain a common set of Sm proteins SNRPB, SNRPD1, SNRPD2, SNRPD3, SNRPE, SNRPF and SNRPG that assemble in a heptameric protein ring on the Sm site of the small nuclear RNA to form the core snRNP (Sm core) (PubMed:10330151). In the cytosol, the Sm proteins SNRPD1, SNRPD2, SNRPE, SNRPF and SNRPG are trapped in an inactive 6S pICln-Sm complex by the chaperone CLNS1A that controls the assembly of the core snRNP (PubMed:10330151, PubMed:18984161). Dissociation by the SMN complex of CLNS1A from the trapped Sm proteins and their transfer to an SMN-Sm complex triggers the assembly of core snRNPs and their transport to the nucleus (PubMed:10330151, PubMed:18984161).</text>
</comment>
<comment type="subunit">
    <text evidence="5 6 7 8">Component of the methylosome, a 20S complex containing at least PRMT5/SKB1, WDR77/MEP50 and CLNS1A/pICln (PubMed:11747828, PubMed:18984161, PubMed:21081503). May mediate SNRPD1 and SNRPD3 methylation. Forms a 6S pICln-Sm complex composed of CLNS1A/pICln, SNRPD1, SNRPD2, SNRPE, SNRPF and SNRPG; ring-like structure where CLNS1A/pICln mimics additional Sm proteins and which is unable to assemble into the core snRNP (PubMed:18984161). Interacts with LSM10 and LSM11 (PubMed:16087681).</text>
</comment>
<comment type="interaction">
    <interactant intactId="EBI-724693">
        <id>P54105</id>
    </interactant>
    <interactant intactId="EBI-10197451">
        <id>P11171-2</id>
        <label>EPB41</label>
    </interactant>
    <organismsDiffer>false</organismsDiffer>
    <experiments>3</experiments>
</comment>
<comment type="interaction">
    <interactant intactId="EBI-724693">
        <id>P54105</id>
    </interactant>
    <interactant intactId="EBI-12325851">
        <id>Q6ZUT3</id>
        <label>FRMD7</label>
    </interactant>
    <organismsDiffer>false</organismsDiffer>
    <experiments>3</experiments>
</comment>
<comment type="interaction">
    <interactant intactId="EBI-724693">
        <id>P54105</id>
    </interactant>
    <interactant intactId="EBI-347416">
        <id>Q9Y333</id>
        <label>LSM2</label>
    </interactant>
    <organismsDiffer>false</organismsDiffer>
    <experiments>8</experiments>
</comment>
<comment type="interaction">
    <interactant intactId="EBI-724693">
        <id>P54105</id>
    </interactant>
    <interactant intactId="EBI-348239">
        <id>P62310</id>
        <label>LSM3</label>
    </interactant>
    <organismsDiffer>false</organismsDiffer>
    <experiments>9</experiments>
</comment>
<comment type="interaction">
    <interactant intactId="EBI-724693">
        <id>P54105</id>
    </interactant>
    <interactant intactId="EBI-373310">
        <id>P62312</id>
        <label>LSM6</label>
    </interactant>
    <organismsDiffer>false</organismsDiffer>
    <experiments>11</experiments>
</comment>
<comment type="interaction">
    <interactant intactId="EBI-724693">
        <id>P54105</id>
    </interactant>
    <interactant intactId="EBI-351098">
        <id>O14744</id>
        <label>PRMT5</label>
    </interactant>
    <organismsDiffer>false</organismsDiffer>
    <experiments>9</experiments>
</comment>
<comment type="interaction">
    <interactant intactId="EBI-724693">
        <id>P54105</id>
    </interactant>
    <interactant intactId="EBI-372458">
        <id>P14678</id>
        <label>SNRPB</label>
    </interactant>
    <organismsDiffer>false</organismsDiffer>
    <experiments>7</experiments>
</comment>
<comment type="interaction">
    <interactant intactId="EBI-724693">
        <id>P54105</id>
    </interactant>
    <interactant intactId="EBI-372475">
        <id>P14678-2</id>
        <label>SNRPB</label>
    </interactant>
    <organismsDiffer>false</organismsDiffer>
    <experiments>3</experiments>
</comment>
<comment type="interaction">
    <interactant intactId="EBI-724693">
        <id>P54105</id>
    </interactant>
    <interactant intactId="EBI-372177">
        <id>P62314</id>
        <label>SNRPD1</label>
    </interactant>
    <organismsDiffer>false</organismsDiffer>
    <experiments>13</experiments>
</comment>
<comment type="interaction">
    <interactant intactId="EBI-724693">
        <id>P54105</id>
    </interactant>
    <interactant intactId="EBI-297993">
        <id>P62316</id>
        <label>SNRPD2</label>
    </interactant>
    <organismsDiffer>false</organismsDiffer>
    <experiments>13</experiments>
</comment>
<comment type="interaction">
    <interactant intactId="EBI-724693">
        <id>P54105</id>
    </interactant>
    <interactant intactId="EBI-372789">
        <id>P62318</id>
        <label>SNRPD3</label>
    </interactant>
    <organismsDiffer>false</organismsDiffer>
    <experiments>11</experiments>
</comment>
<comment type="interaction">
    <interactant intactId="EBI-724693">
        <id>P54105</id>
    </interactant>
    <interactant intactId="EBI-356900">
        <id>P62306</id>
        <label>SNRPF</label>
    </interactant>
    <organismsDiffer>false</organismsDiffer>
    <experiments>9</experiments>
</comment>
<comment type="interaction">
    <interactant intactId="EBI-724693">
        <id>P54105</id>
    </interactant>
    <interactant intactId="EBI-624585">
        <id>P62308</id>
        <label>SNRPG</label>
    </interactant>
    <organismsDiffer>false</organismsDiffer>
    <experiments>11</experiments>
</comment>
<comment type="subcellular location">
    <subcellularLocation>
        <location evidence="7 8">Cytoplasm</location>
        <location evidence="7 8">Cytosol</location>
    </subcellularLocation>
    <subcellularLocation>
        <location evidence="7 8">Nucleus</location>
    </subcellularLocation>
    <subcellularLocation>
        <location evidence="7">Cytoplasm</location>
        <location evidence="7">Cytoskeleton</location>
    </subcellularLocation>
    <text>A small fraction is also associated with the cytoskeleton (PubMed:18984161).</text>
</comment>
<comment type="similarity">
    <text evidence="11">Belongs to the pICln (TC 1.A.47) family.</text>
</comment>
<sequence length="237" mass="26215">MSFLKSFPPPGPAEGLLRQQPDTEAVLNGKGLGTGTLYIAESRLSWLDGSGLGFSLEYPTISLHALSRDRSDCLGEHLYVMVNAKFEEESKEPVADEEEEDSDDDVEPITEFRFVPSDKSALEAMFTAMCECQALHPDPEDEDSDDYDGEEYDVEAHEQGQGDIPTFYTYEEGLSHLTAEGQATLERLEGMLSQSVSSQYNMAGVRTEDSIRDYEDGMEVDTTPTVAGQFEDADVDH</sequence>
<keyword id="KW-0002">3D-structure</keyword>
<keyword id="KW-0007">Acetylation</keyword>
<keyword id="KW-0963">Cytoplasm</keyword>
<keyword id="KW-0206">Cytoskeleton</keyword>
<keyword id="KW-0903">Direct protein sequencing</keyword>
<keyword id="KW-0507">mRNA processing</keyword>
<keyword id="KW-0508">mRNA splicing</keyword>
<keyword id="KW-0539">Nucleus</keyword>
<keyword id="KW-0597">Phosphoprotein</keyword>
<keyword id="KW-1267">Proteomics identification</keyword>
<keyword id="KW-1185">Reference proteome</keyword>
<feature type="initiator methionine" description="Removed" evidence="9 21">
    <location>
        <position position="1"/>
    </location>
</feature>
<feature type="chain" id="PRO_0000185155" description="Methylosome subunit pICln">
    <location>
        <begin position="2"/>
        <end position="237"/>
    </location>
</feature>
<feature type="region of interest" description="Disordered" evidence="1">
    <location>
        <begin position="135"/>
        <end position="159"/>
    </location>
</feature>
<feature type="compositionally biased region" description="Acidic residues" evidence="1">
    <location>
        <begin position="139"/>
        <end position="153"/>
    </location>
</feature>
<feature type="modified residue" description="N-acetylserine" evidence="9 21">
    <location>
        <position position="2"/>
    </location>
</feature>
<feature type="modified residue" description="Phosphoserine" evidence="9 10 12 13 14 15 16 17 18 19 20 22">
    <location>
        <position position="102"/>
    </location>
</feature>
<feature type="modified residue" description="Phosphoserine" evidence="23">
    <location>
        <position position="144"/>
    </location>
</feature>
<feature type="modified residue" description="Phosphoserine" evidence="22">
    <location>
        <position position="193"/>
    </location>
</feature>
<feature type="modified residue" description="Phosphoserine" evidence="22">
    <location>
        <position position="195"/>
    </location>
</feature>
<feature type="modified residue" description="Phosphoserine" evidence="22">
    <location>
        <position position="198"/>
    </location>
</feature>
<feature type="modified residue" description="Phosphoserine" evidence="22">
    <location>
        <position position="210"/>
    </location>
</feature>
<feature type="modified residue" description="Phosphothreonine" evidence="15 22">
    <location>
        <position position="223"/>
    </location>
</feature>
<feature type="sequence variant" id="VAR_015736" evidence="3">
    <original>Q</original>
    <variation>H</variation>
    <location>
        <position position="20"/>
    </location>
</feature>
<feature type="sequence variant" id="VAR_015737" evidence="3">
    <original>M</original>
    <variation>T</variation>
    <location>
        <position position="218"/>
    </location>
</feature>
<feature type="turn" evidence="24">
    <location>
        <begin position="227"/>
        <end position="230"/>
    </location>
</feature>
<dbReference type="EMBL" id="X91788">
    <property type="protein sequence ID" value="CAA62902.1"/>
    <property type="molecule type" value="mRNA"/>
</dbReference>
<dbReference type="EMBL" id="U17899">
    <property type="protein sequence ID" value="AAC50111.1"/>
    <property type="molecule type" value="mRNA"/>
</dbReference>
<dbReference type="EMBL" id="U53454">
    <property type="protein sequence ID" value="AAB03316.1"/>
    <property type="molecule type" value="mRNA"/>
</dbReference>
<dbReference type="EMBL" id="AF005422">
    <property type="protein sequence ID" value="AAB61444.1"/>
    <property type="molecule type" value="mRNA"/>
</dbReference>
<dbReference type="EMBL" id="AF026003">
    <property type="protein sequence ID" value="AAB88806.1"/>
    <property type="molecule type" value="mRNA"/>
</dbReference>
<dbReference type="EMBL" id="AF232708">
    <property type="protein sequence ID" value="AAF76861.1"/>
    <property type="molecule type" value="Genomic_DNA"/>
</dbReference>
<dbReference type="EMBL" id="AF232224">
    <property type="protein sequence ID" value="AAF76858.1"/>
    <property type="molecule type" value="Genomic_DNA"/>
</dbReference>
<dbReference type="EMBL" id="AF232225">
    <property type="protein sequence ID" value="AAF76859.1"/>
    <property type="molecule type" value="Genomic_DNA"/>
</dbReference>
<dbReference type="EMBL" id="AK315259">
    <property type="protein sequence ID" value="BAG37676.1"/>
    <property type="molecule type" value="mRNA"/>
</dbReference>
<dbReference type="EMBL" id="BT019907">
    <property type="protein sequence ID" value="AAV38710.1"/>
    <property type="molecule type" value="mRNA"/>
</dbReference>
<dbReference type="EMBL" id="BC119634">
    <property type="protein sequence ID" value="AAI19635.1"/>
    <property type="molecule type" value="mRNA"/>
</dbReference>
<dbReference type="EMBL" id="BC119635">
    <property type="protein sequence ID" value="AAI19636.1"/>
    <property type="molecule type" value="mRNA"/>
</dbReference>
<dbReference type="CCDS" id="CCDS8252.1"/>
<dbReference type="PIR" id="JC4135">
    <property type="entry name" value="JC4135"/>
</dbReference>
<dbReference type="RefSeq" id="NP_001284.1">
    <property type="nucleotide sequence ID" value="NM_001293.3"/>
</dbReference>
<dbReference type="RefSeq" id="NP_001298128.1">
    <property type="nucleotide sequence ID" value="NM_001311199.2"/>
</dbReference>
<dbReference type="RefSeq" id="NP_001298129.1">
    <property type="nucleotide sequence ID" value="NM_001311200.1"/>
</dbReference>
<dbReference type="RefSeq" id="NP_001298130.1">
    <property type="nucleotide sequence ID" value="NM_001311201.1"/>
</dbReference>
<dbReference type="RefSeq" id="NP_001298131.1">
    <property type="nucleotide sequence ID" value="NM_001311202.1"/>
</dbReference>
<dbReference type="PDB" id="6V0O">
    <property type="method" value="X-ray"/>
    <property type="resolution" value="2.86 A"/>
    <property type="chains" value="D=225-237"/>
</dbReference>
<dbReference type="PDB" id="9E3A">
    <property type="method" value="EM"/>
    <property type="resolution" value="3.36 A"/>
    <property type="chains" value="L=1-237"/>
</dbReference>
<dbReference type="PDB" id="9E3B">
    <property type="method" value="EM"/>
    <property type="resolution" value="3.06 A"/>
    <property type="chains" value="D/F/I/L=1-237"/>
</dbReference>
<dbReference type="PDBsum" id="6V0O"/>
<dbReference type="PDBsum" id="9E3A"/>
<dbReference type="PDBsum" id="9E3B"/>
<dbReference type="EMDB" id="EMD-47476"/>
<dbReference type="EMDB" id="EMD-47477"/>
<dbReference type="SMR" id="P54105"/>
<dbReference type="BioGRID" id="107617">
    <property type="interactions" value="200"/>
</dbReference>
<dbReference type="ComplexPortal" id="CPX-696">
    <property type="entry name" value="PRMT5 methylosome complex, CLNS1A variant"/>
</dbReference>
<dbReference type="CORUM" id="P54105"/>
<dbReference type="DIP" id="DIP-44185N"/>
<dbReference type="FunCoup" id="P54105">
    <property type="interactions" value="3276"/>
</dbReference>
<dbReference type="IntAct" id="P54105">
    <property type="interactions" value="100"/>
</dbReference>
<dbReference type="MINT" id="P54105"/>
<dbReference type="STRING" id="9606.ENSP00000433919"/>
<dbReference type="TCDB" id="1.A.47.1.1">
    <property type="family name" value="the nucleotide-sensitive anion-selective channel, icln (icln) family"/>
</dbReference>
<dbReference type="GlyGen" id="P54105">
    <property type="glycosylation" value="1 site, 1 O-linked glycan (1 site)"/>
</dbReference>
<dbReference type="iPTMnet" id="P54105"/>
<dbReference type="PhosphoSitePlus" id="P54105"/>
<dbReference type="BioMuta" id="CLNS1A"/>
<dbReference type="jPOST" id="P54105"/>
<dbReference type="MassIVE" id="P54105"/>
<dbReference type="PaxDb" id="9606-ENSP00000433919"/>
<dbReference type="PeptideAtlas" id="P54105"/>
<dbReference type="ProteomicsDB" id="56643"/>
<dbReference type="Pumba" id="P54105"/>
<dbReference type="Antibodypedia" id="4508">
    <property type="antibodies" value="192 antibodies from 32 providers"/>
</dbReference>
<dbReference type="DNASU" id="1207"/>
<dbReference type="Ensembl" id="ENST00000525428.6">
    <property type="protein sequence ID" value="ENSP00000433919.1"/>
    <property type="gene ID" value="ENSG00000074201.9"/>
</dbReference>
<dbReference type="Ensembl" id="ENST00000528364.1">
    <property type="protein sequence ID" value="ENSP00000434311.1"/>
    <property type="gene ID" value="ENSG00000074201.9"/>
</dbReference>
<dbReference type="GeneID" id="1207"/>
<dbReference type="KEGG" id="hsa:1207"/>
<dbReference type="MANE-Select" id="ENST00000525428.6">
    <property type="protein sequence ID" value="ENSP00000433919.1"/>
    <property type="RefSeq nucleotide sequence ID" value="NM_001293.3"/>
    <property type="RefSeq protein sequence ID" value="NP_001284.1"/>
</dbReference>
<dbReference type="UCSC" id="uc001oyk.4">
    <property type="organism name" value="human"/>
</dbReference>
<dbReference type="AGR" id="HGNC:2080"/>
<dbReference type="CTD" id="1207"/>
<dbReference type="DisGeNET" id="1207"/>
<dbReference type="GeneCards" id="CLNS1A"/>
<dbReference type="HGNC" id="HGNC:2080">
    <property type="gene designation" value="CLNS1A"/>
</dbReference>
<dbReference type="HPA" id="ENSG00000074201">
    <property type="expression patterns" value="Low tissue specificity"/>
</dbReference>
<dbReference type="MIM" id="602158">
    <property type="type" value="gene"/>
</dbReference>
<dbReference type="neXtProt" id="NX_P54105"/>
<dbReference type="OpenTargets" id="ENSG00000074201"/>
<dbReference type="PharmGKB" id="PA26607"/>
<dbReference type="VEuPathDB" id="HostDB:ENSG00000074201"/>
<dbReference type="eggNOG" id="KOG3238">
    <property type="taxonomic scope" value="Eukaryota"/>
</dbReference>
<dbReference type="GeneTree" id="ENSGT00390000010063"/>
<dbReference type="InParanoid" id="P54105"/>
<dbReference type="OMA" id="SAFPWEH"/>
<dbReference type="OrthoDB" id="19714at2759"/>
<dbReference type="PAN-GO" id="P54105">
    <property type="GO annotations" value="3 GO annotations based on evolutionary models"/>
</dbReference>
<dbReference type="PhylomeDB" id="P54105"/>
<dbReference type="TreeFam" id="TF315155"/>
<dbReference type="PathwayCommons" id="P54105"/>
<dbReference type="Reactome" id="R-HSA-191859">
    <property type="pathway name" value="snRNP Assembly"/>
</dbReference>
<dbReference type="SignaLink" id="P54105"/>
<dbReference type="BioGRID-ORCS" id="1207">
    <property type="hits" value="751 hits in 1127 CRISPR screens"/>
</dbReference>
<dbReference type="CD-CODE" id="DEE660B4">
    <property type="entry name" value="Stress granule"/>
</dbReference>
<dbReference type="ChiTaRS" id="CLNS1A">
    <property type="organism name" value="human"/>
</dbReference>
<dbReference type="GeneWiki" id="CLNS1A"/>
<dbReference type="GenomeRNAi" id="1207"/>
<dbReference type="Pharos" id="P54105">
    <property type="development level" value="Tbio"/>
</dbReference>
<dbReference type="PRO" id="PR:P54105"/>
<dbReference type="Proteomes" id="UP000005640">
    <property type="component" value="Chromosome 11"/>
</dbReference>
<dbReference type="RNAct" id="P54105">
    <property type="molecule type" value="protein"/>
</dbReference>
<dbReference type="Bgee" id="ENSG00000074201">
    <property type="expression patterns" value="Expressed in ventricular zone and 210 other cell types or tissues"/>
</dbReference>
<dbReference type="ExpressionAtlas" id="P54105">
    <property type="expression patterns" value="baseline and differential"/>
</dbReference>
<dbReference type="GO" id="GO:0005929">
    <property type="term" value="C:cilium"/>
    <property type="evidence" value="ECO:0000314"/>
    <property type="project" value="HPA"/>
</dbReference>
<dbReference type="GO" id="GO:0005856">
    <property type="term" value="C:cytoskeleton"/>
    <property type="evidence" value="ECO:0007669"/>
    <property type="project" value="UniProtKB-SubCell"/>
</dbReference>
<dbReference type="GO" id="GO:0005829">
    <property type="term" value="C:cytosol"/>
    <property type="evidence" value="ECO:0000314"/>
    <property type="project" value="UniProtKB"/>
</dbReference>
<dbReference type="GO" id="GO:0043231">
    <property type="term" value="C:intracellular membrane-bounded organelle"/>
    <property type="evidence" value="ECO:0000314"/>
    <property type="project" value="HPA"/>
</dbReference>
<dbReference type="GO" id="GO:0034709">
    <property type="term" value="C:methylosome"/>
    <property type="evidence" value="ECO:0000314"/>
    <property type="project" value="UniProtKB"/>
</dbReference>
<dbReference type="GO" id="GO:0005654">
    <property type="term" value="C:nucleoplasm"/>
    <property type="evidence" value="ECO:0000314"/>
    <property type="project" value="HPA"/>
</dbReference>
<dbReference type="GO" id="GO:0005634">
    <property type="term" value="C:nucleus"/>
    <property type="evidence" value="ECO:0000314"/>
    <property type="project" value="UniProtKB"/>
</dbReference>
<dbReference type="GO" id="GO:0034715">
    <property type="term" value="C:pICln-Sm protein complex"/>
    <property type="evidence" value="ECO:0000314"/>
    <property type="project" value="UniProtKB"/>
</dbReference>
<dbReference type="GO" id="GO:0005886">
    <property type="term" value="C:plasma membrane"/>
    <property type="evidence" value="ECO:0000304"/>
    <property type="project" value="ProtInc"/>
</dbReference>
<dbReference type="GO" id="GO:0005681">
    <property type="term" value="C:spliceosomal complex"/>
    <property type="evidence" value="ECO:0000318"/>
    <property type="project" value="GO_Central"/>
</dbReference>
<dbReference type="GO" id="GO:0003723">
    <property type="term" value="F:RNA binding"/>
    <property type="evidence" value="ECO:0007005"/>
    <property type="project" value="UniProtKB"/>
</dbReference>
<dbReference type="GO" id="GO:0006884">
    <property type="term" value="P:cell volume homeostasis"/>
    <property type="evidence" value="ECO:0007669"/>
    <property type="project" value="InterPro"/>
</dbReference>
<dbReference type="GO" id="GO:0006821">
    <property type="term" value="P:chloride transport"/>
    <property type="evidence" value="ECO:0007669"/>
    <property type="project" value="InterPro"/>
</dbReference>
<dbReference type="GO" id="GO:0045292">
    <property type="term" value="P:mRNA cis splicing, via spliceosome"/>
    <property type="evidence" value="ECO:0000318"/>
    <property type="project" value="GO_Central"/>
</dbReference>
<dbReference type="GO" id="GO:0048026">
    <property type="term" value="P:positive regulation of mRNA splicing, via spliceosome"/>
    <property type="evidence" value="ECO:0000303"/>
    <property type="project" value="ComplexPortal"/>
</dbReference>
<dbReference type="GO" id="GO:0000387">
    <property type="term" value="P:spliceosomal snRNP assembly"/>
    <property type="evidence" value="ECO:0000314"/>
    <property type="project" value="UniProtKB"/>
</dbReference>
<dbReference type="FunFam" id="2.30.29.30:FF:000220">
    <property type="entry name" value="methylosome subunit pICln isoform X1"/>
    <property type="match status" value="1"/>
</dbReference>
<dbReference type="Gene3D" id="2.30.29.30">
    <property type="entry name" value="Pleckstrin-homology domain (PH domain)/Phosphotyrosine-binding domain (PTB)"/>
    <property type="match status" value="1"/>
</dbReference>
<dbReference type="InterPro" id="IPR003521">
    <property type="entry name" value="ICln"/>
</dbReference>
<dbReference type="InterPro" id="IPR039924">
    <property type="entry name" value="ICln/Lot5/Saf5"/>
</dbReference>
<dbReference type="InterPro" id="IPR011993">
    <property type="entry name" value="PH-like_dom_sf"/>
</dbReference>
<dbReference type="PANTHER" id="PTHR21399">
    <property type="entry name" value="CHLORIDE CONDUCTANCE REGULATORY PROTEIN ICLN"/>
    <property type="match status" value="1"/>
</dbReference>
<dbReference type="PANTHER" id="PTHR21399:SF0">
    <property type="entry name" value="METHYLOSOME SUBUNIT PICLN"/>
    <property type="match status" value="1"/>
</dbReference>
<dbReference type="Pfam" id="PF03517">
    <property type="entry name" value="Voldacs"/>
    <property type="match status" value="1"/>
</dbReference>
<dbReference type="PRINTS" id="PR01348">
    <property type="entry name" value="ICLNCHANNEL"/>
</dbReference>
<organism>
    <name type="scientific">Homo sapiens</name>
    <name type="common">Human</name>
    <dbReference type="NCBI Taxonomy" id="9606"/>
    <lineage>
        <taxon>Eukaryota</taxon>
        <taxon>Metazoa</taxon>
        <taxon>Chordata</taxon>
        <taxon>Craniata</taxon>
        <taxon>Vertebrata</taxon>
        <taxon>Euteleostomi</taxon>
        <taxon>Mammalia</taxon>
        <taxon>Eutheria</taxon>
        <taxon>Euarchontoglires</taxon>
        <taxon>Primates</taxon>
        <taxon>Haplorrhini</taxon>
        <taxon>Catarrhini</taxon>
        <taxon>Hominidae</taxon>
        <taxon>Homo</taxon>
    </lineage>
</organism>
<accession>P54105</accession>
<accession>B2RCS9</accession>
<accession>Q0VDK6</accession>
<accession>Q9NRD2</accession>
<accession>Q9NRD3</accession>
<evidence type="ECO:0000256" key="1">
    <source>
        <dbReference type="SAM" id="MobiDB-lite"/>
    </source>
</evidence>
<evidence type="ECO:0000269" key="2">
    <source>
    </source>
</evidence>
<evidence type="ECO:0000269" key="3">
    <source>
    </source>
</evidence>
<evidence type="ECO:0000269" key="4">
    <source>
    </source>
</evidence>
<evidence type="ECO:0000269" key="5">
    <source>
    </source>
</evidence>
<evidence type="ECO:0000269" key="6">
    <source>
    </source>
</evidence>
<evidence type="ECO:0000269" key="7">
    <source>
    </source>
</evidence>
<evidence type="ECO:0000269" key="8">
    <source>
    </source>
</evidence>
<evidence type="ECO:0000269" key="9">
    <source ref="10"/>
</evidence>
<evidence type="ECO:0000269" key="10">
    <source ref="11"/>
</evidence>
<evidence type="ECO:0000305" key="11"/>
<evidence type="ECO:0007744" key="12">
    <source>
    </source>
</evidence>
<evidence type="ECO:0007744" key="13">
    <source>
    </source>
</evidence>
<evidence type="ECO:0007744" key="14">
    <source>
    </source>
</evidence>
<evidence type="ECO:0007744" key="15">
    <source>
    </source>
</evidence>
<evidence type="ECO:0007744" key="16">
    <source>
    </source>
</evidence>
<evidence type="ECO:0007744" key="17">
    <source>
    </source>
</evidence>
<evidence type="ECO:0007744" key="18">
    <source>
    </source>
</evidence>
<evidence type="ECO:0007744" key="19">
    <source>
    </source>
</evidence>
<evidence type="ECO:0007744" key="20">
    <source>
    </source>
</evidence>
<evidence type="ECO:0007744" key="21">
    <source>
    </source>
</evidence>
<evidence type="ECO:0007744" key="22">
    <source>
    </source>
</evidence>
<evidence type="ECO:0007744" key="23">
    <source>
    </source>
</evidence>
<evidence type="ECO:0007829" key="24">
    <source>
        <dbReference type="PDB" id="6V0O"/>
    </source>
</evidence>
<name>ICLN_HUMAN</name>
<reference key="1">
    <citation type="journal article" date="1996" name="Biochem. Biophys. Res. Commun.">
        <title>The ubiquitously expressed pICln protein forms homomeric complexes in vitro.</title>
        <authorList>
            <person name="Buyse G."/>
            <person name="de Greef C."/>
            <person name="Raeymaekers L."/>
            <person name="Droogmans G."/>
            <person name="Nilius B."/>
            <person name="Eggermont J."/>
        </authorList>
    </citation>
    <scope>NUCLEOTIDE SEQUENCE [MRNA]</scope>
</reference>
<reference key="2">
    <citation type="journal article" date="1995" name="Biochem. Biophys. Res. Commun.">
        <title>Molecular cloning of the human volume-sensitive chloride conductance regulatory protein, pICln, from ocular ciliary epithelium.</title>
        <authorList>
            <person name="Anquita J."/>
            <person name="Chalfant M.L."/>
            <person name="Civan M.M."/>
            <person name="Coca-Prados M."/>
        </authorList>
    </citation>
    <scope>NUCLEOTIDE SEQUENCE [MRNA]</scope>
    <source>
        <tissue>Ocular ciliary epithelium</tissue>
    </source>
</reference>
<reference key="3">
    <citation type="submission" date="1996-07" db="EMBL/GenBank/DDBJ databases">
        <title>Colocalization of CLCI and CLCN3 to human 4q32 and mouse 8: the candidate region for tottering (tg).</title>
        <authorList>
            <person name="Lamb F.S."/>
            <person name="Mathews K."/>
            <person name="Mills K."/>
            <person name="Barna T."/>
            <person name="Pruessner J."/>
            <person name="Kresnicka L.S."/>
            <person name="Schutte B.C."/>
        </authorList>
    </citation>
    <scope>NUCLEOTIDE SEQUENCE [MRNA]</scope>
</reference>
<reference key="4">
    <citation type="journal article" date="1997" name="Biochem. J.">
        <title>Molecular cloning and expression of a chloride channel-associated protein pI(Cln) in human young red blood cells: association with actin.</title>
        <authorList>
            <person name="Schwartz R.S."/>
            <person name="Rybicki A.C."/>
            <person name="Nagel R.L."/>
        </authorList>
    </citation>
    <scope>NUCLEOTIDE SEQUENCE [MRNA]</scope>
</reference>
<reference key="5">
    <citation type="submission" date="1997-11" db="EMBL/GenBank/DDBJ databases">
        <title>Chloride ion current inducer protein in human lens epithelium.</title>
        <authorList>
            <person name="Rae J.L."/>
            <person name="Shepard A.R."/>
        </authorList>
    </citation>
    <scope>NUCLEOTIDE SEQUENCE [MRNA]</scope>
    <source>
        <tissue>Lens epithelium</tissue>
    </source>
</reference>
<reference key="6">
    <citation type="journal article" date="2000" name="Biochim. Biophys. Acta">
        <title>Modulation of volume regulated anion current by I(Cln).</title>
        <authorList>
            <person name="Hubert M.D."/>
            <person name="Levitan I."/>
            <person name="Hoffman M.M."/>
            <person name="Zraggen M."/>
            <person name="Hofreiter M.E."/>
            <person name="Garber S.S."/>
        </authorList>
    </citation>
    <scope>NUCLEOTIDE SEQUENCE [GENOMIC DNA]</scope>
    <scope>VARIANTS HIS-20 AND THR-218</scope>
    <source>
        <tissue>Colon cancer</tissue>
        <tissue>Kidney</tissue>
    </source>
</reference>
<reference key="7">
    <citation type="journal article" date="2004" name="Nat. Genet.">
        <title>Complete sequencing and characterization of 21,243 full-length human cDNAs.</title>
        <authorList>
            <person name="Ota T."/>
            <person name="Suzuki Y."/>
            <person name="Nishikawa T."/>
            <person name="Otsuki T."/>
            <person name="Sugiyama T."/>
            <person name="Irie R."/>
            <person name="Wakamatsu A."/>
            <person name="Hayashi K."/>
            <person name="Sato H."/>
            <person name="Nagai K."/>
            <person name="Kimura K."/>
            <person name="Makita H."/>
            <person name="Sekine M."/>
            <person name="Obayashi M."/>
            <person name="Nishi T."/>
            <person name="Shibahara T."/>
            <person name="Tanaka T."/>
            <person name="Ishii S."/>
            <person name="Yamamoto J."/>
            <person name="Saito K."/>
            <person name="Kawai Y."/>
            <person name="Isono Y."/>
            <person name="Nakamura Y."/>
            <person name="Nagahari K."/>
            <person name="Murakami K."/>
            <person name="Yasuda T."/>
            <person name="Iwayanagi T."/>
            <person name="Wagatsuma M."/>
            <person name="Shiratori A."/>
            <person name="Sudo H."/>
            <person name="Hosoiri T."/>
            <person name="Kaku Y."/>
            <person name="Kodaira H."/>
            <person name="Kondo H."/>
            <person name="Sugawara M."/>
            <person name="Takahashi M."/>
            <person name="Kanda K."/>
            <person name="Yokoi T."/>
            <person name="Furuya T."/>
            <person name="Kikkawa E."/>
            <person name="Omura Y."/>
            <person name="Abe K."/>
            <person name="Kamihara K."/>
            <person name="Katsuta N."/>
            <person name="Sato K."/>
            <person name="Tanikawa M."/>
            <person name="Yamazaki M."/>
            <person name="Ninomiya K."/>
            <person name="Ishibashi T."/>
            <person name="Yamashita H."/>
            <person name="Murakawa K."/>
            <person name="Fujimori K."/>
            <person name="Tanai H."/>
            <person name="Kimata M."/>
            <person name="Watanabe M."/>
            <person name="Hiraoka S."/>
            <person name="Chiba Y."/>
            <person name="Ishida S."/>
            <person name="Ono Y."/>
            <person name="Takiguchi S."/>
            <person name="Watanabe S."/>
            <person name="Yosida M."/>
            <person name="Hotuta T."/>
            <person name="Kusano J."/>
            <person name="Kanehori K."/>
            <person name="Takahashi-Fujii A."/>
            <person name="Hara H."/>
            <person name="Tanase T.-O."/>
            <person name="Nomura Y."/>
            <person name="Togiya S."/>
            <person name="Komai F."/>
            <person name="Hara R."/>
            <person name="Takeuchi K."/>
            <person name="Arita M."/>
            <person name="Imose N."/>
            <person name="Musashino K."/>
            <person name="Yuuki H."/>
            <person name="Oshima A."/>
            <person name="Sasaki N."/>
            <person name="Aotsuka S."/>
            <person name="Yoshikawa Y."/>
            <person name="Matsunawa H."/>
            <person name="Ichihara T."/>
            <person name="Shiohata N."/>
            <person name="Sano S."/>
            <person name="Moriya S."/>
            <person name="Momiyama H."/>
            <person name="Satoh N."/>
            <person name="Takami S."/>
            <person name="Terashima Y."/>
            <person name="Suzuki O."/>
            <person name="Nakagawa S."/>
            <person name="Senoh A."/>
            <person name="Mizoguchi H."/>
            <person name="Goto Y."/>
            <person name="Shimizu F."/>
            <person name="Wakebe H."/>
            <person name="Hishigaki H."/>
            <person name="Watanabe T."/>
            <person name="Sugiyama A."/>
            <person name="Takemoto M."/>
            <person name="Kawakami B."/>
            <person name="Yamazaki M."/>
            <person name="Watanabe K."/>
            <person name="Kumagai A."/>
            <person name="Itakura S."/>
            <person name="Fukuzumi Y."/>
            <person name="Fujimori Y."/>
            <person name="Komiyama M."/>
            <person name="Tashiro H."/>
            <person name="Tanigami A."/>
            <person name="Fujiwara T."/>
            <person name="Ono T."/>
            <person name="Yamada K."/>
            <person name="Fujii Y."/>
            <person name="Ozaki K."/>
            <person name="Hirao M."/>
            <person name="Ohmori Y."/>
            <person name="Kawabata A."/>
            <person name="Hikiji T."/>
            <person name="Kobatake N."/>
            <person name="Inagaki H."/>
            <person name="Ikema Y."/>
            <person name="Okamoto S."/>
            <person name="Okitani R."/>
            <person name="Kawakami T."/>
            <person name="Noguchi S."/>
            <person name="Itoh T."/>
            <person name="Shigeta K."/>
            <person name="Senba T."/>
            <person name="Matsumura K."/>
            <person name="Nakajima Y."/>
            <person name="Mizuno T."/>
            <person name="Morinaga M."/>
            <person name="Sasaki M."/>
            <person name="Togashi T."/>
            <person name="Oyama M."/>
            <person name="Hata H."/>
            <person name="Watanabe M."/>
            <person name="Komatsu T."/>
            <person name="Mizushima-Sugano J."/>
            <person name="Satoh T."/>
            <person name="Shirai Y."/>
            <person name="Takahashi Y."/>
            <person name="Nakagawa K."/>
            <person name="Okumura K."/>
            <person name="Nagase T."/>
            <person name="Nomura N."/>
            <person name="Kikuchi H."/>
            <person name="Masuho Y."/>
            <person name="Yamashita R."/>
            <person name="Nakai K."/>
            <person name="Yada T."/>
            <person name="Nakamura Y."/>
            <person name="Ohara O."/>
            <person name="Isogai T."/>
            <person name="Sugano S."/>
        </authorList>
    </citation>
    <scope>NUCLEOTIDE SEQUENCE [LARGE SCALE MRNA]</scope>
    <source>
        <tissue>Subthalamic nucleus</tissue>
    </source>
</reference>
<reference key="8">
    <citation type="submission" date="2003-05" db="EMBL/GenBank/DDBJ databases">
        <title>Cloning of human full-length CDSs in BD Creator(TM) system donor vector.</title>
        <authorList>
            <person name="Kalnine N."/>
            <person name="Chen X."/>
            <person name="Rolfs A."/>
            <person name="Halleck A."/>
            <person name="Hines L."/>
            <person name="Eisenstein S."/>
            <person name="Koundinya M."/>
            <person name="Raphael J."/>
            <person name="Moreira D."/>
            <person name="Kelley T."/>
            <person name="LaBaer J."/>
            <person name="Lin Y."/>
            <person name="Phelan M."/>
            <person name="Farmer A."/>
        </authorList>
    </citation>
    <scope>NUCLEOTIDE SEQUENCE [LARGE SCALE MRNA]</scope>
</reference>
<reference key="9">
    <citation type="journal article" date="2004" name="Genome Res.">
        <title>The status, quality, and expansion of the NIH full-length cDNA project: the Mammalian Gene Collection (MGC).</title>
        <authorList>
            <consortium name="The MGC Project Team"/>
        </authorList>
    </citation>
    <scope>NUCLEOTIDE SEQUENCE [LARGE SCALE MRNA]</scope>
</reference>
<reference key="10">
    <citation type="submission" date="2008-10" db="UniProtKB">
        <authorList>
            <person name="Bienvenut W.V."/>
            <person name="Calvo F."/>
            <person name="Zebisch A."/>
            <person name="Kolch W."/>
        </authorList>
    </citation>
    <scope>PROTEIN SEQUENCE OF 2-43; 86-113 AND 188-237</scope>
    <scope>CLEAVAGE OF INITIATOR METHIONINE</scope>
    <scope>ACETYLATION AT SER-2</scope>
    <scope>PHOSPHORYLATION AT SER-102</scope>
    <scope>IDENTIFICATION BY MASS SPECTROMETRY</scope>
    <source>
        <tissue>Cervix carcinoma</tissue>
        <tissue>Colon carcinoma</tissue>
    </source>
</reference>
<reference key="11">
    <citation type="submission" date="2009-03" db="UniProtKB">
        <authorList>
            <person name="Bienvenut W.V."/>
            <person name="Waridel P."/>
            <person name="Quadroni M."/>
        </authorList>
    </citation>
    <scope>PROTEIN SEQUENCE OF 19-113 AND 188-237</scope>
    <scope>PHOSPHORYLATION AT SER-102</scope>
    <scope>IDENTIFICATION BY MASS SPECTROMETRY</scope>
    <source>
        <tissue>Embryonic kidney</tissue>
    </source>
</reference>
<reference key="12">
    <citation type="journal article" date="1999" name="Mol. Cell. Biol.">
        <title>pICln inhibits snRNP biogenesis by binding core spliceosomal proteins.</title>
        <authorList>
            <person name="Pu W.T."/>
            <person name="Krapivinsky G.B."/>
            <person name="Krapivinsky L."/>
            <person name="Clapham D.E."/>
        </authorList>
    </citation>
    <scope>FUNCTION IN SNRNP BIOGENESIS</scope>
</reference>
<reference key="13">
    <citation type="journal article" date="2001" name="Curr. Biol.">
        <title>Methylation of Sm proteins by a complex containing PRMT5 and the putative U snRNP assembly factor pICln.</title>
        <authorList>
            <person name="Meister G."/>
            <person name="Eggert C."/>
            <person name="Buehler D."/>
            <person name="Brahms H."/>
            <person name="Kambach C."/>
            <person name="Fischer U."/>
        </authorList>
    </citation>
    <scope>IDENTIFICATION IN THE METHYLOSOME COMPLEX</scope>
</reference>
<reference key="14">
    <citation type="journal article" date="2001" name="Mol. Cell. Biol.">
        <title>The methylosome, a 20S complex containing JBP1 and pICln, produces dimethylarginine-modified Sm proteins.</title>
        <authorList>
            <person name="Friesen W.J."/>
            <person name="Paushkin S."/>
            <person name="Wyce A."/>
            <person name="Massenet S."/>
            <person name="Pesiridis G.S."/>
            <person name="Van Duyne G."/>
            <person name="Rappsilber J."/>
            <person name="Mann M."/>
            <person name="Dreyfuss G."/>
        </authorList>
    </citation>
    <scope>FUNCTION IN METHYLOSOME</scope>
</reference>
<reference key="15">
    <citation type="journal article" date="2005" name="J. Biol. Chem.">
        <title>Toward an assembly line for U7 snRNPs: interactions of U7-specific Lsm proteins with PRMT5 and SMN complexes.</title>
        <authorList>
            <person name="Azzouz T.N."/>
            <person name="Pillai R.S."/>
            <person name="Dapp C."/>
            <person name="Chari A."/>
            <person name="Meister G."/>
            <person name="Kambach C."/>
            <person name="Fischer U."/>
            <person name="Schuemperli D."/>
        </authorList>
    </citation>
    <scope>INTERACTION WITH LSM10; LSM11 AND SNRPB</scope>
</reference>
<reference key="16">
    <citation type="journal article" date="2006" name="Cell">
        <title>Global, in vivo, and site-specific phosphorylation dynamics in signaling networks.</title>
        <authorList>
            <person name="Olsen J.V."/>
            <person name="Blagoev B."/>
            <person name="Gnad F."/>
            <person name="Macek B."/>
            <person name="Kumar C."/>
            <person name="Mortensen P."/>
            <person name="Mann M."/>
        </authorList>
    </citation>
    <scope>PHOSPHORYLATION [LARGE SCALE ANALYSIS] AT SER-102</scope>
    <scope>IDENTIFICATION BY MASS SPECTROMETRY [LARGE SCALE ANALYSIS]</scope>
    <source>
        <tissue>Cervix carcinoma</tissue>
    </source>
</reference>
<reference key="17">
    <citation type="journal article" date="2007" name="Electrophoresis">
        <title>Toward a global characterization of the phosphoproteome in prostate cancer cells: identification of phosphoproteins in the LNCaP cell line.</title>
        <authorList>
            <person name="Giorgianni F."/>
            <person name="Zhao Y."/>
            <person name="Desiderio D.M."/>
            <person name="Beranova-Giorgianni S."/>
        </authorList>
    </citation>
    <scope>PHOSPHORYLATION [LARGE SCALE ANALYSIS] AT SER-102</scope>
    <scope>IDENTIFICATION BY MASS SPECTROMETRY [LARGE SCALE ANALYSIS]</scope>
    <source>
        <tissue>Prostate cancer</tissue>
    </source>
</reference>
<reference key="18">
    <citation type="journal article" date="2007" name="Science">
        <title>ATM and ATR substrate analysis reveals extensive protein networks responsive to DNA damage.</title>
        <authorList>
            <person name="Matsuoka S."/>
            <person name="Ballif B.A."/>
            <person name="Smogorzewska A."/>
            <person name="McDonald E.R. III"/>
            <person name="Hurov K.E."/>
            <person name="Luo J."/>
            <person name="Bakalarski C.E."/>
            <person name="Zhao Z."/>
            <person name="Solimini N."/>
            <person name="Lerenthal Y."/>
            <person name="Shiloh Y."/>
            <person name="Gygi S.P."/>
            <person name="Elledge S.J."/>
        </authorList>
    </citation>
    <scope>IDENTIFICATION BY MASS SPECTROMETRY [LARGE SCALE ANALYSIS]</scope>
    <source>
        <tissue>Embryonic kidney</tissue>
    </source>
</reference>
<reference key="19">
    <citation type="journal article" date="2008" name="Cell">
        <title>An assembly chaperone collaborates with the SMN complex to generate spliceosomal SnRNPs.</title>
        <authorList>
            <person name="Chari A."/>
            <person name="Golas M.M."/>
            <person name="Klingenhager M."/>
            <person name="Neuenkirchen N."/>
            <person name="Sander B."/>
            <person name="Englbrecht C."/>
            <person name="Sickmann A."/>
            <person name="Stark H."/>
            <person name="Fischer U."/>
        </authorList>
    </citation>
    <scope>FUNCTION IN SNRNP BIOGENESIS</scope>
    <scope>IDENTIFICATION IN THE METHYLOSOME COMPLEX</scope>
    <scope>IDENTIFICATION IN 6S PICLN-SM COMPLEX</scope>
    <scope>SUBCELLULAR LOCATION</scope>
</reference>
<reference key="20">
    <citation type="journal article" date="2008" name="Mol. Cell">
        <title>Kinase-selective enrichment enables quantitative phosphoproteomics of the kinome across the cell cycle.</title>
        <authorList>
            <person name="Daub H."/>
            <person name="Olsen J.V."/>
            <person name="Bairlein M."/>
            <person name="Gnad F."/>
            <person name="Oppermann F.S."/>
            <person name="Korner R."/>
            <person name="Greff Z."/>
            <person name="Keri G."/>
            <person name="Stemmann O."/>
            <person name="Mann M."/>
        </authorList>
    </citation>
    <scope>PHOSPHORYLATION [LARGE SCALE ANALYSIS] AT SER-102</scope>
    <scope>IDENTIFICATION BY MASS SPECTROMETRY [LARGE SCALE ANALYSIS]</scope>
    <source>
        <tissue>Cervix carcinoma</tissue>
    </source>
</reference>
<reference key="21">
    <citation type="journal article" date="2008" name="Proc. Natl. Acad. Sci. U.S.A.">
        <title>A quantitative atlas of mitotic phosphorylation.</title>
        <authorList>
            <person name="Dephoure N."/>
            <person name="Zhou C."/>
            <person name="Villen J."/>
            <person name="Beausoleil S.A."/>
            <person name="Bakalarski C.E."/>
            <person name="Elledge S.J."/>
            <person name="Gygi S.P."/>
        </authorList>
    </citation>
    <scope>PHOSPHORYLATION [LARGE SCALE ANALYSIS] AT SER-102 AND THR-223</scope>
    <scope>IDENTIFICATION BY MASS SPECTROMETRY [LARGE SCALE ANALYSIS]</scope>
    <source>
        <tissue>Cervix carcinoma</tissue>
    </source>
</reference>
<reference key="22">
    <citation type="journal article" date="2008" name="Proteomics">
        <title>Large-scale phosphoproteome analysis of human liver tissue by enrichment and fractionation of phosphopeptides with strong anion exchange chromatography.</title>
        <authorList>
            <person name="Han G."/>
            <person name="Ye M."/>
            <person name="Zhou H."/>
            <person name="Jiang X."/>
            <person name="Feng S."/>
            <person name="Jiang X."/>
            <person name="Tian R."/>
            <person name="Wan D."/>
            <person name="Zou H."/>
            <person name="Gu J."/>
        </authorList>
    </citation>
    <scope>PHOSPHORYLATION [LARGE SCALE ANALYSIS] AT SER-102</scope>
    <scope>IDENTIFICATION BY MASS SPECTROMETRY [LARGE SCALE ANALYSIS]</scope>
    <source>
        <tissue>Liver</tissue>
    </source>
</reference>
<reference key="23">
    <citation type="journal article" date="2009" name="Anal. Chem.">
        <title>Lys-N and trypsin cover complementary parts of the phosphoproteome in a refined SCX-based approach.</title>
        <authorList>
            <person name="Gauci S."/>
            <person name="Helbig A.O."/>
            <person name="Slijper M."/>
            <person name="Krijgsveld J."/>
            <person name="Heck A.J."/>
            <person name="Mohammed S."/>
        </authorList>
    </citation>
    <scope>IDENTIFICATION BY MASS SPECTROMETRY [LARGE SCALE ANALYSIS]</scope>
</reference>
<reference key="24">
    <citation type="journal article" date="2009" name="Mol. Cell. Proteomics">
        <title>Large-scale proteomics analysis of the human kinome.</title>
        <authorList>
            <person name="Oppermann F.S."/>
            <person name="Gnad F."/>
            <person name="Olsen J.V."/>
            <person name="Hornberger R."/>
            <person name="Greff Z."/>
            <person name="Keri G."/>
            <person name="Mann M."/>
            <person name="Daub H."/>
        </authorList>
    </citation>
    <scope>PHOSPHORYLATION [LARGE SCALE ANALYSIS] AT SER-102</scope>
    <scope>IDENTIFICATION BY MASS SPECTROMETRY [LARGE SCALE ANALYSIS]</scope>
</reference>
<reference key="25">
    <citation type="journal article" date="2009" name="Sci. Signal.">
        <title>Quantitative phosphoproteomic analysis of T cell receptor signaling reveals system-wide modulation of protein-protein interactions.</title>
        <authorList>
            <person name="Mayya V."/>
            <person name="Lundgren D.H."/>
            <person name="Hwang S.-I."/>
            <person name="Rezaul K."/>
            <person name="Wu L."/>
            <person name="Eng J.K."/>
            <person name="Rodionov V."/>
            <person name="Han D.K."/>
        </authorList>
    </citation>
    <scope>PHOSPHORYLATION [LARGE SCALE ANALYSIS] AT SER-102</scope>
    <scope>IDENTIFICATION BY MASS SPECTROMETRY [LARGE SCALE ANALYSIS]</scope>
    <source>
        <tissue>Leukemic T-cell</tissue>
    </source>
</reference>
<reference key="26">
    <citation type="journal article" date="2010" name="Sci. Signal.">
        <title>Quantitative phosphoproteomics reveals widespread full phosphorylation site occupancy during mitosis.</title>
        <authorList>
            <person name="Olsen J.V."/>
            <person name="Vermeulen M."/>
            <person name="Santamaria A."/>
            <person name="Kumar C."/>
            <person name="Miller M.L."/>
            <person name="Jensen L.J."/>
            <person name="Gnad F."/>
            <person name="Cox J."/>
            <person name="Jensen T.S."/>
            <person name="Nigg E.A."/>
            <person name="Brunak S."/>
            <person name="Mann M."/>
        </authorList>
    </citation>
    <scope>PHOSPHORYLATION [LARGE SCALE ANALYSIS] AT SER-102</scope>
    <scope>IDENTIFICATION BY MASS SPECTROMETRY [LARGE SCALE ANALYSIS]</scope>
    <source>
        <tissue>Cervix carcinoma</tissue>
    </source>
</reference>
<reference key="27">
    <citation type="journal article" date="2011" name="BMC Syst. Biol.">
        <title>Initial characterization of the human central proteome.</title>
        <authorList>
            <person name="Burkard T.R."/>
            <person name="Planyavsky M."/>
            <person name="Kaupe I."/>
            <person name="Breitwieser F.P."/>
            <person name="Buerckstuemmer T."/>
            <person name="Bennett K.L."/>
            <person name="Superti-Furga G."/>
            <person name="Colinge J."/>
        </authorList>
    </citation>
    <scope>IDENTIFICATION BY MASS SPECTROMETRY [LARGE SCALE ANALYSIS]</scope>
</reference>
<reference key="28">
    <citation type="journal article" date="2011" name="J. Biol. Chem.">
        <title>RioK1, a new interactor of protein arginine methyltransferase 5 (PRMT5), competes with pICln for binding and modulates PRMT5 complex composition and substrate specificity.</title>
        <authorList>
            <person name="Guderian G."/>
            <person name="Peter C."/>
            <person name="Wiesner J."/>
            <person name="Sickmann A."/>
            <person name="Schulze-Osthoff K."/>
            <person name="Fischer U."/>
            <person name="Grimmler M."/>
        </authorList>
    </citation>
    <scope>SUBUNIT</scope>
    <scope>SUBCELLULAR LOCATION</scope>
    <scope>INTERACTION WITH PRTM5</scope>
    <scope>IDENTIFICATION IN THE METHYLOSOME COMPLEX</scope>
    <scope>FUNCTION</scope>
</reference>
<reference key="29">
    <citation type="journal article" date="2011" name="Sci. Signal.">
        <title>System-wide temporal characterization of the proteome and phosphoproteome of human embryonic stem cell differentiation.</title>
        <authorList>
            <person name="Rigbolt K.T."/>
            <person name="Prokhorova T.A."/>
            <person name="Akimov V."/>
            <person name="Henningsen J."/>
            <person name="Johansen P.T."/>
            <person name="Kratchmarova I."/>
            <person name="Kassem M."/>
            <person name="Mann M."/>
            <person name="Olsen J.V."/>
            <person name="Blagoev B."/>
        </authorList>
    </citation>
    <scope>PHOSPHORYLATION [LARGE SCALE ANALYSIS] AT SER-102</scope>
    <scope>IDENTIFICATION BY MASS SPECTROMETRY [LARGE SCALE ANALYSIS]</scope>
</reference>
<reference key="30">
    <citation type="journal article" date="2012" name="Proc. Natl. Acad. Sci. U.S.A.">
        <title>N-terminal acetylome analyses and functional insights of the N-terminal acetyltransferase NatB.</title>
        <authorList>
            <person name="Van Damme P."/>
            <person name="Lasa M."/>
            <person name="Polevoda B."/>
            <person name="Gazquez C."/>
            <person name="Elosegui-Artola A."/>
            <person name="Kim D.S."/>
            <person name="De Juan-Pardo E."/>
            <person name="Demeyer K."/>
            <person name="Hole K."/>
            <person name="Larrea E."/>
            <person name="Timmerman E."/>
            <person name="Prieto J."/>
            <person name="Arnesen T."/>
            <person name="Sherman F."/>
            <person name="Gevaert K."/>
            <person name="Aldabe R."/>
        </authorList>
    </citation>
    <scope>ACETYLATION [LARGE SCALE ANALYSIS] AT SER-2</scope>
    <scope>CLEAVAGE OF INITIATOR METHIONINE [LARGE SCALE ANALYSIS]</scope>
    <scope>IDENTIFICATION BY MASS SPECTROMETRY [LARGE SCALE ANALYSIS]</scope>
</reference>
<reference key="31">
    <citation type="journal article" date="2013" name="J. Proteome Res.">
        <title>Toward a comprehensive characterization of a human cancer cell phosphoproteome.</title>
        <authorList>
            <person name="Zhou H."/>
            <person name="Di Palma S."/>
            <person name="Preisinger C."/>
            <person name="Peng M."/>
            <person name="Polat A.N."/>
            <person name="Heck A.J."/>
            <person name="Mohammed S."/>
        </authorList>
    </citation>
    <scope>PHOSPHORYLATION [LARGE SCALE ANALYSIS] AT SER-102; SER-193; SER-195; SER-198; SER-210 AND THR-223</scope>
    <scope>IDENTIFICATION BY MASS SPECTROMETRY [LARGE SCALE ANALYSIS]</scope>
    <source>
        <tissue>Cervix carcinoma</tissue>
        <tissue>Erythroleukemia</tissue>
    </source>
</reference>
<reference key="32">
    <citation type="journal article" date="2014" name="J. Proteomics">
        <title>An enzyme assisted RP-RPLC approach for in-depth analysis of human liver phosphoproteome.</title>
        <authorList>
            <person name="Bian Y."/>
            <person name="Song C."/>
            <person name="Cheng K."/>
            <person name="Dong M."/>
            <person name="Wang F."/>
            <person name="Huang J."/>
            <person name="Sun D."/>
            <person name="Wang L."/>
            <person name="Ye M."/>
            <person name="Zou H."/>
        </authorList>
    </citation>
    <scope>PHOSPHORYLATION [LARGE SCALE ANALYSIS] AT SER-144</scope>
    <scope>IDENTIFICATION BY MASS SPECTROMETRY [LARGE SCALE ANALYSIS]</scope>
    <source>
        <tissue>Liver</tissue>
    </source>
</reference>
<proteinExistence type="evidence at protein level"/>
<gene>
    <name type="primary">CLNS1A</name>
    <name type="synonym">CLCI</name>
    <name type="synonym">ICLN</name>
</gene>